<evidence type="ECO:0000255" key="1">
    <source>
        <dbReference type="HAMAP-Rule" id="MF_00336"/>
    </source>
</evidence>
<proteinExistence type="inferred from homology"/>
<accession>A7GFJ8</accession>
<gene>
    <name evidence="1" type="primary">bioD</name>
    <name type="ordered locus">CLI_2308</name>
</gene>
<organism>
    <name type="scientific">Clostridium botulinum (strain Langeland / NCTC 10281 / Type F)</name>
    <dbReference type="NCBI Taxonomy" id="441772"/>
    <lineage>
        <taxon>Bacteria</taxon>
        <taxon>Bacillati</taxon>
        <taxon>Bacillota</taxon>
        <taxon>Clostridia</taxon>
        <taxon>Eubacteriales</taxon>
        <taxon>Clostridiaceae</taxon>
        <taxon>Clostridium</taxon>
    </lineage>
</organism>
<keyword id="KW-0067">ATP-binding</keyword>
<keyword id="KW-0093">Biotin biosynthesis</keyword>
<keyword id="KW-0963">Cytoplasm</keyword>
<keyword id="KW-0436">Ligase</keyword>
<keyword id="KW-0460">Magnesium</keyword>
<keyword id="KW-0479">Metal-binding</keyword>
<keyword id="KW-0547">Nucleotide-binding</keyword>
<sequence length="227" mass="25428">MARGIFITATGTDIGKTYVTALIIKRLRETNINCGYYKAALSGAERRDGKLIAGDANYVYNIANIKGDPNDAVSYIFQQAVSPHLAAKLNNVEISMERIKKDFYSIKNKYDYITVEGSGGIVCPISTGKEKIMLDNIIKIFKLPAIVVADAGLGTINSTILTLQYMKEKNISVKMILLNNYNHEDIIHIENKRYLSDNLLIPVYTCNKNANKLEIPVEKLIEIYEEI</sequence>
<feature type="chain" id="PRO_1000019558" description="ATP-dependent dethiobiotin synthetase BioD">
    <location>
        <begin position="1"/>
        <end position="227"/>
    </location>
</feature>
<feature type="active site" evidence="1">
    <location>
        <position position="38"/>
    </location>
</feature>
<feature type="binding site" evidence="1">
    <location>
        <begin position="13"/>
        <end position="18"/>
    </location>
    <ligand>
        <name>ATP</name>
        <dbReference type="ChEBI" id="CHEBI:30616"/>
    </ligand>
</feature>
<feature type="binding site" evidence="1">
    <location>
        <position position="17"/>
    </location>
    <ligand>
        <name>Mg(2+)</name>
        <dbReference type="ChEBI" id="CHEBI:18420"/>
    </ligand>
</feature>
<feature type="binding site" evidence="1">
    <location>
        <position position="42"/>
    </location>
    <ligand>
        <name>substrate</name>
    </ligand>
</feature>
<feature type="binding site" evidence="1">
    <location>
        <position position="55"/>
    </location>
    <ligand>
        <name>ATP</name>
        <dbReference type="ChEBI" id="CHEBI:30616"/>
    </ligand>
</feature>
<feature type="binding site" evidence="1">
    <location>
        <position position="55"/>
    </location>
    <ligand>
        <name>Mg(2+)</name>
        <dbReference type="ChEBI" id="CHEBI:18420"/>
    </ligand>
</feature>
<feature type="binding site" evidence="1">
    <location>
        <begin position="116"/>
        <end position="119"/>
    </location>
    <ligand>
        <name>ATP</name>
        <dbReference type="ChEBI" id="CHEBI:30616"/>
    </ligand>
</feature>
<feature type="binding site" evidence="1">
    <location>
        <position position="116"/>
    </location>
    <ligand>
        <name>Mg(2+)</name>
        <dbReference type="ChEBI" id="CHEBI:18420"/>
    </ligand>
</feature>
<feature type="binding site" evidence="1">
    <location>
        <begin position="179"/>
        <end position="180"/>
    </location>
    <ligand>
        <name>ATP</name>
        <dbReference type="ChEBI" id="CHEBI:30616"/>
    </ligand>
</feature>
<name>BIOD_CLOBL</name>
<protein>
    <recommendedName>
        <fullName evidence="1">ATP-dependent dethiobiotin synthetase BioD</fullName>
        <ecNumber evidence="1">6.3.3.3</ecNumber>
    </recommendedName>
    <alternativeName>
        <fullName evidence="1">DTB synthetase</fullName>
        <shortName evidence="1">DTBS</shortName>
    </alternativeName>
    <alternativeName>
        <fullName evidence="1">Dethiobiotin synthase</fullName>
    </alternativeName>
</protein>
<comment type="function">
    <text evidence="1">Catalyzes a mechanistically unusual reaction, the ATP-dependent insertion of CO2 between the N7 and N8 nitrogen atoms of 7,8-diaminopelargonic acid (DAPA, also called 7,8-diammoniononanoate) to form a ureido ring.</text>
</comment>
<comment type="catalytic activity">
    <reaction evidence="1">
        <text>(7R,8S)-7,8-diammoniononanoate + CO2 + ATP = (4R,5S)-dethiobiotin + ADP + phosphate + 3 H(+)</text>
        <dbReference type="Rhea" id="RHEA:15805"/>
        <dbReference type="ChEBI" id="CHEBI:15378"/>
        <dbReference type="ChEBI" id="CHEBI:16526"/>
        <dbReference type="ChEBI" id="CHEBI:30616"/>
        <dbReference type="ChEBI" id="CHEBI:43474"/>
        <dbReference type="ChEBI" id="CHEBI:149469"/>
        <dbReference type="ChEBI" id="CHEBI:149473"/>
        <dbReference type="ChEBI" id="CHEBI:456216"/>
        <dbReference type="EC" id="6.3.3.3"/>
    </reaction>
</comment>
<comment type="cofactor">
    <cofactor evidence="1">
        <name>Mg(2+)</name>
        <dbReference type="ChEBI" id="CHEBI:18420"/>
    </cofactor>
</comment>
<comment type="pathway">
    <text evidence="1">Cofactor biosynthesis; biotin biosynthesis; biotin from 7,8-diaminononanoate: step 1/2.</text>
</comment>
<comment type="subunit">
    <text evidence="1">Homodimer.</text>
</comment>
<comment type="subcellular location">
    <subcellularLocation>
        <location evidence="1">Cytoplasm</location>
    </subcellularLocation>
</comment>
<comment type="similarity">
    <text evidence="1">Belongs to the dethiobiotin synthetase family.</text>
</comment>
<reference key="1">
    <citation type="submission" date="2007-06" db="EMBL/GenBank/DDBJ databases">
        <authorList>
            <person name="Brinkac L.M."/>
            <person name="Daugherty S."/>
            <person name="Dodson R.J."/>
            <person name="Madupu R."/>
            <person name="Brown J.L."/>
            <person name="Bruce D."/>
            <person name="Detter C."/>
            <person name="Munk C."/>
            <person name="Smith L.A."/>
            <person name="Smith T.J."/>
            <person name="White O."/>
            <person name="Brettin T.S."/>
        </authorList>
    </citation>
    <scope>NUCLEOTIDE SEQUENCE [LARGE SCALE GENOMIC DNA]</scope>
    <source>
        <strain>Langeland / NCTC 10281 / Type F</strain>
    </source>
</reference>
<dbReference type="EC" id="6.3.3.3" evidence="1"/>
<dbReference type="EMBL" id="CP000728">
    <property type="protein sequence ID" value="ABS42436.1"/>
    <property type="molecule type" value="Genomic_DNA"/>
</dbReference>
<dbReference type="RefSeq" id="WP_012100229.1">
    <property type="nucleotide sequence ID" value="NC_009699.1"/>
</dbReference>
<dbReference type="SMR" id="A7GFJ8"/>
<dbReference type="KEGG" id="cbf:CLI_2308"/>
<dbReference type="HOGENOM" id="CLU_072551_3_0_9"/>
<dbReference type="UniPathway" id="UPA00078">
    <property type="reaction ID" value="UER00161"/>
</dbReference>
<dbReference type="Proteomes" id="UP000002410">
    <property type="component" value="Chromosome"/>
</dbReference>
<dbReference type="GO" id="GO:0005829">
    <property type="term" value="C:cytosol"/>
    <property type="evidence" value="ECO:0007669"/>
    <property type="project" value="TreeGrafter"/>
</dbReference>
<dbReference type="GO" id="GO:0005524">
    <property type="term" value="F:ATP binding"/>
    <property type="evidence" value="ECO:0007669"/>
    <property type="project" value="UniProtKB-UniRule"/>
</dbReference>
<dbReference type="GO" id="GO:0004141">
    <property type="term" value="F:dethiobiotin synthase activity"/>
    <property type="evidence" value="ECO:0007669"/>
    <property type="project" value="UniProtKB-UniRule"/>
</dbReference>
<dbReference type="GO" id="GO:0000287">
    <property type="term" value="F:magnesium ion binding"/>
    <property type="evidence" value="ECO:0007669"/>
    <property type="project" value="UniProtKB-UniRule"/>
</dbReference>
<dbReference type="GO" id="GO:0009102">
    <property type="term" value="P:biotin biosynthetic process"/>
    <property type="evidence" value="ECO:0007669"/>
    <property type="project" value="UniProtKB-UniRule"/>
</dbReference>
<dbReference type="CDD" id="cd03109">
    <property type="entry name" value="DTBS"/>
    <property type="match status" value="1"/>
</dbReference>
<dbReference type="FunFam" id="3.40.50.300:FF:003305">
    <property type="entry name" value="ATP-dependent dethiobiotin synthetase BioD"/>
    <property type="match status" value="1"/>
</dbReference>
<dbReference type="Gene3D" id="3.40.50.300">
    <property type="entry name" value="P-loop containing nucleotide triphosphate hydrolases"/>
    <property type="match status" value="1"/>
</dbReference>
<dbReference type="HAMAP" id="MF_00336">
    <property type="entry name" value="BioD"/>
    <property type="match status" value="1"/>
</dbReference>
<dbReference type="InterPro" id="IPR004472">
    <property type="entry name" value="DTB_synth_BioD"/>
</dbReference>
<dbReference type="InterPro" id="IPR027417">
    <property type="entry name" value="P-loop_NTPase"/>
</dbReference>
<dbReference type="NCBIfam" id="TIGR00347">
    <property type="entry name" value="bioD"/>
    <property type="match status" value="1"/>
</dbReference>
<dbReference type="PANTHER" id="PTHR43210:SF2">
    <property type="entry name" value="ATP-DEPENDENT DETHIOBIOTIN SYNTHETASE BIOD 2"/>
    <property type="match status" value="1"/>
</dbReference>
<dbReference type="PANTHER" id="PTHR43210">
    <property type="entry name" value="DETHIOBIOTIN SYNTHETASE"/>
    <property type="match status" value="1"/>
</dbReference>
<dbReference type="Pfam" id="PF13500">
    <property type="entry name" value="AAA_26"/>
    <property type="match status" value="1"/>
</dbReference>
<dbReference type="PIRSF" id="PIRSF006755">
    <property type="entry name" value="DTB_synth"/>
    <property type="match status" value="1"/>
</dbReference>
<dbReference type="SUPFAM" id="SSF52540">
    <property type="entry name" value="P-loop containing nucleoside triphosphate hydrolases"/>
    <property type="match status" value="1"/>
</dbReference>